<accession>Q08439</accession>
<accession>O00020</accession>
<protein>
    <recommendedName>
        <fullName>Putative uncharacterized protein YOR055W</fullName>
    </recommendedName>
</protein>
<dbReference type="EMBL" id="Z70678">
    <property type="protein sequence ID" value="CAA94540.1"/>
    <property type="molecule type" value="Genomic_DNA"/>
</dbReference>
<dbReference type="EMBL" id="Z74961">
    <property type="protein sequence ID" value="CAA99247.1"/>
    <property type="molecule type" value="Genomic_DNA"/>
</dbReference>
<dbReference type="PIR" id="S66938">
    <property type="entry name" value="S66938"/>
</dbReference>
<dbReference type="STRING" id="4932.YOR055W"/>
<dbReference type="PaxDb" id="4932-YOR055W"/>
<dbReference type="EnsemblFungi" id="YOR055W_mRNA">
    <property type="protein sequence ID" value="YOR055W"/>
    <property type="gene ID" value="YOR055W"/>
</dbReference>
<dbReference type="AGR" id="SGD:S000005581"/>
<dbReference type="SGD" id="S000005581">
    <property type="gene designation" value="YOR055W"/>
</dbReference>
<dbReference type="HOGENOM" id="CLU_1797954_0_0_1"/>
<keyword id="KW-0732">Signal</keyword>
<proteinExistence type="uncertain"/>
<feature type="signal peptide" evidence="1">
    <location>
        <begin position="1"/>
        <end position="22"/>
    </location>
</feature>
<feature type="chain" id="PRO_0000299708" description="Putative uncharacterized protein YOR055W">
    <location>
        <begin position="23"/>
        <end position="144"/>
    </location>
</feature>
<reference key="1">
    <citation type="journal article" date="1997" name="Yeast">
        <title>The sequence of a 54.7 kb fragment of yeast chromosome XV reveals the presence of two tRNAs and 24 new open reading frames.</title>
        <authorList>
            <person name="Valens M."/>
            <person name="Bohn C."/>
            <person name="Daignan-Fornier B."/>
            <person name="Dang V.-D."/>
            <person name="Bolotin-Fukuhara M."/>
        </authorList>
    </citation>
    <scope>NUCLEOTIDE SEQUENCE [GENOMIC DNA]</scope>
    <source>
        <strain>ATCC 96604 / S288c / FY1679</strain>
    </source>
</reference>
<reference key="2">
    <citation type="journal article" date="1997" name="Nature">
        <title>The nucleotide sequence of Saccharomyces cerevisiae chromosome XV.</title>
        <authorList>
            <person name="Dujon B."/>
            <person name="Albermann K."/>
            <person name="Aldea M."/>
            <person name="Alexandraki D."/>
            <person name="Ansorge W."/>
            <person name="Arino J."/>
            <person name="Benes V."/>
            <person name="Bohn C."/>
            <person name="Bolotin-Fukuhara M."/>
            <person name="Bordonne R."/>
            <person name="Boyer J."/>
            <person name="Camasses A."/>
            <person name="Casamayor A."/>
            <person name="Casas C."/>
            <person name="Cheret G."/>
            <person name="Cziepluch C."/>
            <person name="Daignan-Fornier B."/>
            <person name="Dang V.-D."/>
            <person name="de Haan M."/>
            <person name="Delius H."/>
            <person name="Durand P."/>
            <person name="Fairhead C."/>
            <person name="Feldmann H."/>
            <person name="Gaillon L."/>
            <person name="Galisson F."/>
            <person name="Gamo F.-J."/>
            <person name="Gancedo C."/>
            <person name="Goffeau A."/>
            <person name="Goulding S.E."/>
            <person name="Grivell L.A."/>
            <person name="Habbig B."/>
            <person name="Hand N.J."/>
            <person name="Hani J."/>
            <person name="Hattenhorst U."/>
            <person name="Hebling U."/>
            <person name="Hernando Y."/>
            <person name="Herrero E."/>
            <person name="Heumann K."/>
            <person name="Hiesel R."/>
            <person name="Hilger F."/>
            <person name="Hofmann B."/>
            <person name="Hollenberg C.P."/>
            <person name="Hughes B."/>
            <person name="Jauniaux J.-C."/>
            <person name="Kalogeropoulos A."/>
            <person name="Katsoulou C."/>
            <person name="Kordes E."/>
            <person name="Lafuente M.J."/>
            <person name="Landt O."/>
            <person name="Louis E.J."/>
            <person name="Maarse A.C."/>
            <person name="Madania A."/>
            <person name="Mannhaupt G."/>
            <person name="Marck C."/>
            <person name="Martin R.P."/>
            <person name="Mewes H.-W."/>
            <person name="Michaux G."/>
            <person name="Paces V."/>
            <person name="Parle-McDermott A.G."/>
            <person name="Pearson B.M."/>
            <person name="Perrin A."/>
            <person name="Pettersson B."/>
            <person name="Poch O."/>
            <person name="Pohl T.M."/>
            <person name="Poirey R."/>
            <person name="Portetelle D."/>
            <person name="Pujol A."/>
            <person name="Purnelle B."/>
            <person name="Ramezani Rad M."/>
            <person name="Rechmann S."/>
            <person name="Schwager C."/>
            <person name="Schweizer M."/>
            <person name="Sor F."/>
            <person name="Sterky F."/>
            <person name="Tarassov I.A."/>
            <person name="Teodoru C."/>
            <person name="Tettelin H."/>
            <person name="Thierry A."/>
            <person name="Tobiasch E."/>
            <person name="Tzermia M."/>
            <person name="Uhlen M."/>
            <person name="Unseld M."/>
            <person name="Valens M."/>
            <person name="Vandenbol M."/>
            <person name="Vetter I."/>
            <person name="Vlcek C."/>
            <person name="Voet M."/>
            <person name="Volckaert G."/>
            <person name="Voss H."/>
            <person name="Wambutt R."/>
            <person name="Wedler H."/>
            <person name="Wiemann S."/>
            <person name="Winsor B."/>
            <person name="Wolfe K.H."/>
            <person name="Zollner A."/>
            <person name="Zumstein E."/>
            <person name="Kleine K."/>
        </authorList>
    </citation>
    <scope>NUCLEOTIDE SEQUENCE [LARGE SCALE GENOMIC DNA]</scope>
    <source>
        <strain>ATCC 204508 / S288c</strain>
    </source>
</reference>
<reference key="3">
    <citation type="journal article" date="2014" name="G3 (Bethesda)">
        <title>The reference genome sequence of Saccharomyces cerevisiae: Then and now.</title>
        <authorList>
            <person name="Engel S.R."/>
            <person name="Dietrich F.S."/>
            <person name="Fisk D.G."/>
            <person name="Binkley G."/>
            <person name="Balakrishnan R."/>
            <person name="Costanzo M.C."/>
            <person name="Dwight S.S."/>
            <person name="Hitz B.C."/>
            <person name="Karra K."/>
            <person name="Nash R.S."/>
            <person name="Weng S."/>
            <person name="Wong E.D."/>
            <person name="Lloyd P."/>
            <person name="Skrzypek M.S."/>
            <person name="Miyasato S.R."/>
            <person name="Simison M."/>
            <person name="Cherry J.M."/>
        </authorList>
    </citation>
    <scope>GENOME REANNOTATION</scope>
    <source>
        <strain>ATCC 204508 / S288c</strain>
    </source>
</reference>
<gene>
    <name type="ordered locus">YOR055W</name>
    <name type="ORF">O2803</name>
    <name type="ORF">YOR29-06</name>
</gene>
<sequence>MCTDVAFFSLDCLATWLGGVCSTSDLRLPNFGSLNVTVGILFNPGSGVLLTTAPEVPLAFMIDLVCEPVGLVDFLTTGVSRLETEENGPVEFVSGIADEPILACSAPERVFEATPFLLFFRLDLFVIASLHYNYGQYSSFWSLL</sequence>
<name>YO055_YEAST</name>
<evidence type="ECO:0000255" key="1"/>
<evidence type="ECO:0000305" key="2"/>
<evidence type="ECO:0000305" key="3">
    <source>
    </source>
</evidence>
<organism>
    <name type="scientific">Saccharomyces cerevisiae (strain ATCC 204508 / S288c)</name>
    <name type="common">Baker's yeast</name>
    <dbReference type="NCBI Taxonomy" id="559292"/>
    <lineage>
        <taxon>Eukaryota</taxon>
        <taxon>Fungi</taxon>
        <taxon>Dikarya</taxon>
        <taxon>Ascomycota</taxon>
        <taxon>Saccharomycotina</taxon>
        <taxon>Saccharomycetes</taxon>
        <taxon>Saccharomycetales</taxon>
        <taxon>Saccharomycetaceae</taxon>
        <taxon>Saccharomyces</taxon>
    </lineage>
</organism>
<comment type="miscellaneous">
    <text evidence="2">Almost completely overlaps VHS3.</text>
</comment>
<comment type="caution">
    <text evidence="3">Product of a dubious gene prediction unlikely to encode a functional protein. Because of that it is not part of the S.cerevisiae S288c complete/reference proteome set.</text>
</comment>